<evidence type="ECO:0000255" key="1"/>
<evidence type="ECO:0000305" key="2"/>
<feature type="chain" id="PRO_0000128006" description="Uncharacterized protein AF_1462">
    <location>
        <begin position="1"/>
        <end position="183"/>
    </location>
</feature>
<feature type="transmembrane region" description="Helical" evidence="1">
    <location>
        <begin position="37"/>
        <end position="59"/>
    </location>
</feature>
<feature type="transmembrane region" description="Helical" evidence="1">
    <location>
        <begin position="79"/>
        <end position="98"/>
    </location>
</feature>
<feature type="transmembrane region" description="Helical" evidence="1">
    <location>
        <begin position="110"/>
        <end position="132"/>
    </location>
</feature>
<feature type="transmembrane region" description="Helical" evidence="1">
    <location>
        <begin position="142"/>
        <end position="161"/>
    </location>
</feature>
<sequence length="183" mass="20953">MTVLSFTLMVNQFYLTRGFRLIEGKGRMSYIVKAHRLFGYISVGFLLFHPLLEVLPRQFEGSIQPFDAFWKIITTDNSAILLGIAGWAVMLTLAVTSVLRKRLFKNYRKWRTFHGILAVVLITVVGYHVLVLGRHSSLAMKAFYAVLLAGGYVTMIKTYVFDLRREEKWKNRGLKLAEDSSSP</sequence>
<proteinExistence type="predicted"/>
<name>Y1462_ARCFU</name>
<comment type="subcellular location">
    <subcellularLocation>
        <location evidence="2">Cell membrane</location>
        <topology evidence="2">Multi-pass membrane protein</topology>
    </subcellularLocation>
</comment>
<gene>
    <name type="ordered locus">AF_1462</name>
</gene>
<accession>O28810</accession>
<reference key="1">
    <citation type="journal article" date="1997" name="Nature">
        <title>The complete genome sequence of the hyperthermophilic, sulphate-reducing archaeon Archaeoglobus fulgidus.</title>
        <authorList>
            <person name="Klenk H.-P."/>
            <person name="Clayton R.A."/>
            <person name="Tomb J.-F."/>
            <person name="White O."/>
            <person name="Nelson K.E."/>
            <person name="Ketchum K.A."/>
            <person name="Dodson R.J."/>
            <person name="Gwinn M.L."/>
            <person name="Hickey E.K."/>
            <person name="Peterson J.D."/>
            <person name="Richardson D.L."/>
            <person name="Kerlavage A.R."/>
            <person name="Graham D.E."/>
            <person name="Kyrpides N.C."/>
            <person name="Fleischmann R.D."/>
            <person name="Quackenbush J."/>
            <person name="Lee N.H."/>
            <person name="Sutton G.G."/>
            <person name="Gill S.R."/>
            <person name="Kirkness E.F."/>
            <person name="Dougherty B.A."/>
            <person name="McKenney K."/>
            <person name="Adams M.D."/>
            <person name="Loftus B.J."/>
            <person name="Peterson S.N."/>
            <person name="Reich C.I."/>
            <person name="McNeil L.K."/>
            <person name="Badger J.H."/>
            <person name="Glodek A."/>
            <person name="Zhou L."/>
            <person name="Overbeek R."/>
            <person name="Gocayne J.D."/>
            <person name="Weidman J.F."/>
            <person name="McDonald L.A."/>
            <person name="Utterback T.R."/>
            <person name="Cotton M.D."/>
            <person name="Spriggs T."/>
            <person name="Artiach P."/>
            <person name="Kaine B.P."/>
            <person name="Sykes S.M."/>
            <person name="Sadow P.W."/>
            <person name="D'Andrea K.P."/>
            <person name="Bowman C."/>
            <person name="Fujii C."/>
            <person name="Garland S.A."/>
            <person name="Mason T.M."/>
            <person name="Olsen G.J."/>
            <person name="Fraser C.M."/>
            <person name="Smith H.O."/>
            <person name="Woese C.R."/>
            <person name="Venter J.C."/>
        </authorList>
    </citation>
    <scope>NUCLEOTIDE SEQUENCE [LARGE SCALE GENOMIC DNA]</scope>
    <source>
        <strain>ATCC 49558 / DSM 4304 / JCM 9628 / NBRC 100126 / VC-16</strain>
    </source>
</reference>
<protein>
    <recommendedName>
        <fullName>Uncharacterized protein AF_1462</fullName>
    </recommendedName>
</protein>
<keyword id="KW-1003">Cell membrane</keyword>
<keyword id="KW-0472">Membrane</keyword>
<keyword id="KW-1185">Reference proteome</keyword>
<keyword id="KW-0812">Transmembrane</keyword>
<keyword id="KW-1133">Transmembrane helix</keyword>
<organism>
    <name type="scientific">Archaeoglobus fulgidus (strain ATCC 49558 / DSM 4304 / JCM 9628 / NBRC 100126 / VC-16)</name>
    <dbReference type="NCBI Taxonomy" id="224325"/>
    <lineage>
        <taxon>Archaea</taxon>
        <taxon>Methanobacteriati</taxon>
        <taxon>Methanobacteriota</taxon>
        <taxon>Archaeoglobi</taxon>
        <taxon>Archaeoglobales</taxon>
        <taxon>Archaeoglobaceae</taxon>
        <taxon>Archaeoglobus</taxon>
    </lineage>
</organism>
<dbReference type="EMBL" id="AE000782">
    <property type="protein sequence ID" value="AAB89790.1"/>
    <property type="molecule type" value="Genomic_DNA"/>
</dbReference>
<dbReference type="PIR" id="E69432">
    <property type="entry name" value="E69432"/>
</dbReference>
<dbReference type="RefSeq" id="WP_010878959.1">
    <property type="nucleotide sequence ID" value="NC_000917.1"/>
</dbReference>
<dbReference type="STRING" id="224325.AF_1462"/>
<dbReference type="PaxDb" id="224325-AF_1462"/>
<dbReference type="EnsemblBacteria" id="AAB89790">
    <property type="protein sequence ID" value="AAB89790"/>
    <property type="gene ID" value="AF_1462"/>
</dbReference>
<dbReference type="GeneID" id="1484688"/>
<dbReference type="KEGG" id="afu:AF_1462"/>
<dbReference type="HOGENOM" id="CLU_1472001_0_0_2"/>
<dbReference type="Proteomes" id="UP000002199">
    <property type="component" value="Chromosome"/>
</dbReference>
<dbReference type="GO" id="GO:0005886">
    <property type="term" value="C:plasma membrane"/>
    <property type="evidence" value="ECO:0007669"/>
    <property type="project" value="UniProtKB-SubCell"/>
</dbReference>
<dbReference type="InterPro" id="IPR013130">
    <property type="entry name" value="Fe3_Rdtase_TM_dom"/>
</dbReference>
<dbReference type="Pfam" id="PF01794">
    <property type="entry name" value="Ferric_reduct"/>
    <property type="match status" value="1"/>
</dbReference>